<name>RAP22_ARATH</name>
<comment type="function">
    <text evidence="3 4 6">Transcription factor involved in carotenoid biosynthesis regulation. Binds to the 5'-ATCTA-3' element present in the promoter of phytoene synthase (PSY) and phytoene desaturase (PDS). Involved in ethylene response and resistance to necrotrophic pathogens. Acts as a downstream regulator in the ethylene signaling pathway. Partially redundant with RAP2-12.</text>
</comment>
<comment type="subunit">
    <text evidence="3 5">Interacts with MED25 and SINAT2.</text>
</comment>
<comment type="subcellular location">
    <subcellularLocation>
        <location evidence="10">Nucleus</location>
    </subcellularLocation>
</comment>
<comment type="alternative products">
    <event type="alternative splicing"/>
    <isoform>
        <id>Q9LUM4-1</id>
        <name>1</name>
        <sequence type="displayed"/>
    </isoform>
    <isoform>
        <id>Q9LUM4-2</id>
        <name>2</name>
        <sequence type="described" ref="VSP_027407"/>
    </isoform>
    <isoform>
        <id>Q9LUM4-3</id>
        <name>3</name>
        <sequence type="described" ref="VSP_053957"/>
    </isoform>
</comment>
<comment type="tissue specificity">
    <text evidence="4 7">Constitutive in flowers, leaves, stems, and roots.</text>
</comment>
<comment type="induction">
    <text evidence="4 6">Up-regulated by darkness, ethylene and Botrytis cinerea.</text>
</comment>
<comment type="disruption phenotype">
    <text evidence="3">Lethal when homozygous.</text>
</comment>
<comment type="miscellaneous">
    <molecule>Isoform 2</molecule>
    <text evidence="10">May be due to a competing donor splice site.</text>
</comment>
<comment type="similarity">
    <text evidence="10">Belongs to the AP2/ERF transcription factor family. ERF subfamily.</text>
</comment>
<comment type="sequence caution" evidence="10">
    <conflict type="erroneous gene model prediction">
        <sequence resource="EMBL-CDS" id="BAB01029"/>
    </conflict>
</comment>
<feature type="chain" id="PRO_0000297933" description="Ethylene-responsive transcription factor RAP2-2">
    <location>
        <begin position="1"/>
        <end position="379"/>
    </location>
</feature>
<feature type="DNA-binding region" description="AP2/ERF" evidence="1">
    <location>
        <begin position="127"/>
        <end position="184"/>
    </location>
</feature>
<feature type="region of interest" description="Disordered" evidence="2">
    <location>
        <begin position="185"/>
        <end position="208"/>
    </location>
</feature>
<feature type="compositionally biased region" description="Polar residues" evidence="2">
    <location>
        <begin position="190"/>
        <end position="206"/>
    </location>
</feature>
<feature type="splice variant" id="VSP_053957" description="In isoform 3." evidence="10">
    <location>
        <begin position="97"/>
        <end position="101"/>
    </location>
</feature>
<feature type="splice variant" id="VSP_027407" description="In isoform 2." evidence="8 9">
    <location>
        <begin position="97"/>
        <end position="100"/>
    </location>
</feature>
<feature type="sequence conflict" description="In Ref. 4; AAM62802." evidence="10" ref="4">
    <original>E</original>
    <variation>K</variation>
    <location>
        <position position="345"/>
    </location>
</feature>
<protein>
    <recommendedName>
        <fullName>Ethylene-responsive transcription factor RAP2-2</fullName>
        <shortName>AtRAP2.2</shortName>
    </recommendedName>
    <alternativeName>
        <fullName>Protein RELATED TO APETALA2 2</fullName>
    </alternativeName>
</protein>
<keyword id="KW-0010">Activator</keyword>
<keyword id="KW-0025">Alternative splicing</keyword>
<keyword id="KW-0238">DNA-binding</keyword>
<keyword id="KW-0936">Ethylene signaling pathway</keyword>
<keyword id="KW-0539">Nucleus</keyword>
<keyword id="KW-1185">Reference proteome</keyword>
<keyword id="KW-0804">Transcription</keyword>
<keyword id="KW-0805">Transcription regulation</keyword>
<dbReference type="EMBL" id="AB022220">
    <property type="protein sequence ID" value="BAB01029.1"/>
    <property type="status" value="ALT_SEQ"/>
    <property type="molecule type" value="Genomic_DNA"/>
</dbReference>
<dbReference type="EMBL" id="CP002686">
    <property type="protein sequence ID" value="AEE75490.1"/>
    <property type="molecule type" value="Genomic_DNA"/>
</dbReference>
<dbReference type="EMBL" id="CP002686">
    <property type="protein sequence ID" value="AEE75491.1"/>
    <property type="molecule type" value="Genomic_DNA"/>
</dbReference>
<dbReference type="EMBL" id="CP002686">
    <property type="protein sequence ID" value="AEE75492.1"/>
    <property type="molecule type" value="Genomic_DNA"/>
</dbReference>
<dbReference type="EMBL" id="AY054539">
    <property type="protein sequence ID" value="AAK96730.1"/>
    <property type="molecule type" value="mRNA"/>
</dbReference>
<dbReference type="EMBL" id="BT000374">
    <property type="protein sequence ID" value="AAN15693.1"/>
    <property type="molecule type" value="mRNA"/>
</dbReference>
<dbReference type="EMBL" id="AY085580">
    <property type="protein sequence ID" value="AAM62802.1"/>
    <property type="molecule type" value="mRNA"/>
</dbReference>
<dbReference type="EMBL" id="AF003095">
    <property type="protein sequence ID" value="AAC49768.1"/>
    <property type="molecule type" value="mRNA"/>
</dbReference>
<dbReference type="RefSeq" id="NP_566482.1">
    <molecule id="Q9LUM4-1"/>
    <property type="nucleotide sequence ID" value="NM_112281.2"/>
</dbReference>
<dbReference type="RefSeq" id="NP_850582.1">
    <molecule id="Q9LUM4-2"/>
    <property type="nucleotide sequence ID" value="NM_180251.3"/>
</dbReference>
<dbReference type="RefSeq" id="NP_850583.1">
    <molecule id="Q9LUM4-3"/>
    <property type="nucleotide sequence ID" value="NM_180252.1"/>
</dbReference>
<dbReference type="SMR" id="Q9LUM4"/>
<dbReference type="BioGRID" id="5977">
    <property type="interactions" value="16"/>
</dbReference>
<dbReference type="ELM" id="Q9LUM4"/>
<dbReference type="FunCoup" id="Q9LUM4">
    <property type="interactions" value="1228"/>
</dbReference>
<dbReference type="IntAct" id="Q9LUM4">
    <property type="interactions" value="4"/>
</dbReference>
<dbReference type="STRING" id="3702.Q9LUM4"/>
<dbReference type="PaxDb" id="3702-AT3G14230.1"/>
<dbReference type="ProteomicsDB" id="236863">
    <molecule id="Q9LUM4-1"/>
</dbReference>
<dbReference type="EnsemblPlants" id="AT3G14230.1">
    <molecule id="Q9LUM4-1"/>
    <property type="protein sequence ID" value="AT3G14230.1"/>
    <property type="gene ID" value="AT3G14230"/>
</dbReference>
<dbReference type="EnsemblPlants" id="AT3G14230.2">
    <molecule id="Q9LUM4-2"/>
    <property type="protein sequence ID" value="AT3G14230.2"/>
    <property type="gene ID" value="AT3G14230"/>
</dbReference>
<dbReference type="EnsemblPlants" id="AT3G14230.3">
    <molecule id="Q9LUM4-3"/>
    <property type="protein sequence ID" value="AT3G14230.3"/>
    <property type="gene ID" value="AT3G14230"/>
</dbReference>
<dbReference type="Gramene" id="AT3G14230.1">
    <molecule id="Q9LUM4-1"/>
    <property type="protein sequence ID" value="AT3G14230.1"/>
    <property type="gene ID" value="AT3G14230"/>
</dbReference>
<dbReference type="Gramene" id="AT3G14230.2">
    <molecule id="Q9LUM4-2"/>
    <property type="protein sequence ID" value="AT3G14230.2"/>
    <property type="gene ID" value="AT3G14230"/>
</dbReference>
<dbReference type="Gramene" id="AT3G14230.3">
    <molecule id="Q9LUM4-3"/>
    <property type="protein sequence ID" value="AT3G14230.3"/>
    <property type="gene ID" value="AT3G14230"/>
</dbReference>
<dbReference type="KEGG" id="ath:AT3G14230"/>
<dbReference type="Araport" id="AT3G14230"/>
<dbReference type="TAIR" id="AT3G14230">
    <property type="gene designation" value="RAP2.2"/>
</dbReference>
<dbReference type="eggNOG" id="ENOG502QV26">
    <property type="taxonomic scope" value="Eukaryota"/>
</dbReference>
<dbReference type="InParanoid" id="Q9LUM4"/>
<dbReference type="OMA" id="TSEHLWP"/>
<dbReference type="OrthoDB" id="668733at2759"/>
<dbReference type="PhylomeDB" id="Q9LUM4"/>
<dbReference type="PRO" id="PR:Q9LUM4"/>
<dbReference type="Proteomes" id="UP000006548">
    <property type="component" value="Chromosome 3"/>
</dbReference>
<dbReference type="ExpressionAtlas" id="Q9LUM4">
    <property type="expression patterns" value="baseline and differential"/>
</dbReference>
<dbReference type="GO" id="GO:0005634">
    <property type="term" value="C:nucleus"/>
    <property type="evidence" value="ECO:0007669"/>
    <property type="project" value="UniProtKB-SubCell"/>
</dbReference>
<dbReference type="GO" id="GO:0003700">
    <property type="term" value="F:DNA-binding transcription factor activity"/>
    <property type="evidence" value="ECO:0000250"/>
    <property type="project" value="TAIR"/>
</dbReference>
<dbReference type="GO" id="GO:0000976">
    <property type="term" value="F:transcription cis-regulatory region binding"/>
    <property type="evidence" value="ECO:0000353"/>
    <property type="project" value="TAIR"/>
</dbReference>
<dbReference type="GO" id="GO:0009873">
    <property type="term" value="P:ethylene-activated signaling pathway"/>
    <property type="evidence" value="ECO:0007669"/>
    <property type="project" value="UniProtKB-KW"/>
</dbReference>
<dbReference type="GO" id="GO:0010468">
    <property type="term" value="P:regulation of gene expression"/>
    <property type="evidence" value="ECO:0000270"/>
    <property type="project" value="TAIR"/>
</dbReference>
<dbReference type="GO" id="GO:0001666">
    <property type="term" value="P:response to hypoxia"/>
    <property type="evidence" value="ECO:0000315"/>
    <property type="project" value="TAIR"/>
</dbReference>
<dbReference type="CDD" id="cd00018">
    <property type="entry name" value="AP2"/>
    <property type="match status" value="1"/>
</dbReference>
<dbReference type="FunFam" id="3.30.730.10:FF:000001">
    <property type="entry name" value="Ethylene-responsive transcription factor 2"/>
    <property type="match status" value="1"/>
</dbReference>
<dbReference type="Gene3D" id="3.30.730.10">
    <property type="entry name" value="AP2/ERF domain"/>
    <property type="match status" value="1"/>
</dbReference>
<dbReference type="InterPro" id="IPR001471">
    <property type="entry name" value="AP2/ERF_dom"/>
</dbReference>
<dbReference type="InterPro" id="IPR036955">
    <property type="entry name" value="AP2/ERF_dom_sf"/>
</dbReference>
<dbReference type="InterPro" id="IPR016177">
    <property type="entry name" value="DNA-bd_dom_sf"/>
</dbReference>
<dbReference type="InterPro" id="IPR044808">
    <property type="entry name" value="ERF_plant"/>
</dbReference>
<dbReference type="PANTHER" id="PTHR31190">
    <property type="entry name" value="DNA-BINDING DOMAIN"/>
    <property type="match status" value="1"/>
</dbReference>
<dbReference type="PANTHER" id="PTHR31190:SF455">
    <property type="entry name" value="ETHYLENE-RESPONSIVE TRANSCRIPTION FACTOR RAP2-2"/>
    <property type="match status" value="1"/>
</dbReference>
<dbReference type="Pfam" id="PF00847">
    <property type="entry name" value="AP2"/>
    <property type="match status" value="1"/>
</dbReference>
<dbReference type="PRINTS" id="PR00367">
    <property type="entry name" value="ETHRSPELEMNT"/>
</dbReference>
<dbReference type="SMART" id="SM00380">
    <property type="entry name" value="AP2"/>
    <property type="match status" value="1"/>
</dbReference>
<dbReference type="SUPFAM" id="SSF54171">
    <property type="entry name" value="DNA-binding domain"/>
    <property type="match status" value="1"/>
</dbReference>
<dbReference type="PROSITE" id="PS51032">
    <property type="entry name" value="AP2_ERF"/>
    <property type="match status" value="1"/>
</dbReference>
<accession>Q9LUM4</accession>
<accession>A8MRL7</accession>
<accession>O23104</accession>
<accession>Q8LE76</accession>
<gene>
    <name type="primary">RAP2-2</name>
    <name type="synonym">ERF075</name>
    <name type="ordered locus">At3g14230</name>
    <name type="ORF">MLN21.1</name>
</gene>
<proteinExistence type="evidence at protein level"/>
<organism>
    <name type="scientific">Arabidopsis thaliana</name>
    <name type="common">Mouse-ear cress</name>
    <dbReference type="NCBI Taxonomy" id="3702"/>
    <lineage>
        <taxon>Eukaryota</taxon>
        <taxon>Viridiplantae</taxon>
        <taxon>Streptophyta</taxon>
        <taxon>Embryophyta</taxon>
        <taxon>Tracheophyta</taxon>
        <taxon>Spermatophyta</taxon>
        <taxon>Magnoliopsida</taxon>
        <taxon>eudicotyledons</taxon>
        <taxon>Gunneridae</taxon>
        <taxon>Pentapetalae</taxon>
        <taxon>rosids</taxon>
        <taxon>malvids</taxon>
        <taxon>Brassicales</taxon>
        <taxon>Brassicaceae</taxon>
        <taxon>Camelineae</taxon>
        <taxon>Arabidopsis</taxon>
    </lineage>
</organism>
<reference key="1">
    <citation type="journal article" date="2000" name="DNA Res.">
        <title>Structural analysis of Arabidopsis thaliana chromosome 3. I. Sequence features of the regions of 4,504,864 bp covered by sixty P1 and TAC clones.</title>
        <authorList>
            <person name="Sato S."/>
            <person name="Nakamura Y."/>
            <person name="Kaneko T."/>
            <person name="Katoh T."/>
            <person name="Asamizu E."/>
            <person name="Tabata S."/>
        </authorList>
    </citation>
    <scope>NUCLEOTIDE SEQUENCE [LARGE SCALE GENOMIC DNA]</scope>
    <source>
        <strain>cv. Columbia</strain>
    </source>
</reference>
<reference key="2">
    <citation type="journal article" date="2017" name="Plant J.">
        <title>Araport11: a complete reannotation of the Arabidopsis thaliana reference genome.</title>
        <authorList>
            <person name="Cheng C.Y."/>
            <person name="Krishnakumar V."/>
            <person name="Chan A.P."/>
            <person name="Thibaud-Nissen F."/>
            <person name="Schobel S."/>
            <person name="Town C.D."/>
        </authorList>
    </citation>
    <scope>GENOME REANNOTATION</scope>
    <source>
        <strain>cv. Columbia</strain>
    </source>
</reference>
<reference key="3">
    <citation type="journal article" date="2003" name="Science">
        <title>Empirical analysis of transcriptional activity in the Arabidopsis genome.</title>
        <authorList>
            <person name="Yamada K."/>
            <person name="Lim J."/>
            <person name="Dale J.M."/>
            <person name="Chen H."/>
            <person name="Shinn P."/>
            <person name="Palm C.J."/>
            <person name="Southwick A.M."/>
            <person name="Wu H.C."/>
            <person name="Kim C.J."/>
            <person name="Nguyen M."/>
            <person name="Pham P.K."/>
            <person name="Cheuk R.F."/>
            <person name="Karlin-Newmann G."/>
            <person name="Liu S.X."/>
            <person name="Lam B."/>
            <person name="Sakano H."/>
            <person name="Wu T."/>
            <person name="Yu G."/>
            <person name="Miranda M."/>
            <person name="Quach H.L."/>
            <person name="Tripp M."/>
            <person name="Chang C.H."/>
            <person name="Lee J.M."/>
            <person name="Toriumi M.J."/>
            <person name="Chan M.M."/>
            <person name="Tang C.C."/>
            <person name="Onodera C.S."/>
            <person name="Deng J.M."/>
            <person name="Akiyama K."/>
            <person name="Ansari Y."/>
            <person name="Arakawa T."/>
            <person name="Banh J."/>
            <person name="Banno F."/>
            <person name="Bowser L."/>
            <person name="Brooks S.Y."/>
            <person name="Carninci P."/>
            <person name="Chao Q."/>
            <person name="Choy N."/>
            <person name="Enju A."/>
            <person name="Goldsmith A.D."/>
            <person name="Gurjal M."/>
            <person name="Hansen N.F."/>
            <person name="Hayashizaki Y."/>
            <person name="Johnson-Hopson C."/>
            <person name="Hsuan V.W."/>
            <person name="Iida K."/>
            <person name="Karnes M."/>
            <person name="Khan S."/>
            <person name="Koesema E."/>
            <person name="Ishida J."/>
            <person name="Jiang P.X."/>
            <person name="Jones T."/>
            <person name="Kawai J."/>
            <person name="Kamiya A."/>
            <person name="Meyers C."/>
            <person name="Nakajima M."/>
            <person name="Narusaka M."/>
            <person name="Seki M."/>
            <person name="Sakurai T."/>
            <person name="Satou M."/>
            <person name="Tamse R."/>
            <person name="Vaysberg M."/>
            <person name="Wallender E.K."/>
            <person name="Wong C."/>
            <person name="Yamamura Y."/>
            <person name="Yuan S."/>
            <person name="Shinozaki K."/>
            <person name="Davis R.W."/>
            <person name="Theologis A."/>
            <person name="Ecker J.R."/>
        </authorList>
    </citation>
    <scope>NUCLEOTIDE SEQUENCE [LARGE SCALE MRNA] (ISOFORM 2)</scope>
    <source>
        <strain>cv. Columbia</strain>
    </source>
</reference>
<reference key="4">
    <citation type="submission" date="2002-03" db="EMBL/GenBank/DDBJ databases">
        <title>Full-length cDNA from Arabidopsis thaliana.</title>
        <authorList>
            <person name="Brover V.V."/>
            <person name="Troukhan M.E."/>
            <person name="Alexandrov N.A."/>
            <person name="Lu Y.-P."/>
            <person name="Flavell R.B."/>
            <person name="Feldmann K.A."/>
        </authorList>
    </citation>
    <scope>NUCLEOTIDE SEQUENCE [LARGE SCALE MRNA] (ISOFORM 1)</scope>
</reference>
<reference key="5">
    <citation type="journal article" date="1997" name="Proc. Natl. Acad. Sci. U.S.A.">
        <title>The AP2 domain of APETALA2 defines a large new family of DNA binding proteins in Arabidopsis.</title>
        <authorList>
            <person name="Okamuro J.K."/>
            <person name="Caster B."/>
            <person name="Villarroel R."/>
            <person name="Van Montagu M."/>
            <person name="Jofuku K.D."/>
        </authorList>
    </citation>
    <scope>NUCLEOTIDE SEQUENCE [MRNA] OF 130-375 (ISOFORM 2)</scope>
    <scope>TISSUE SPECIFICITY</scope>
</reference>
<reference key="6">
    <citation type="journal article" date="2006" name="Plant Physiol.">
        <title>Genome-wide analysis of the ERF gene family in Arabidopsis and rice.</title>
        <authorList>
            <person name="Nakano T."/>
            <person name="Suzuki K."/>
            <person name="Fujimura T."/>
            <person name="Shinshi H."/>
        </authorList>
    </citation>
    <scope>GENE FAMILY</scope>
    <scope>NOMENCLATURE</scope>
</reference>
<reference key="7">
    <citation type="journal article" date="2007" name="Plant Physiol.">
        <title>Transcription factor RAP2.2 and its interacting partner SINAT2: stable elements in the carotenogenesis of Arabidopsis leaves.</title>
        <authorList>
            <person name="Welsch R."/>
            <person name="Maass D."/>
            <person name="Voegel T."/>
            <person name="Dellapenna D."/>
            <person name="Beyer P."/>
        </authorList>
    </citation>
    <scope>FUNCTION</scope>
    <scope>DNA-BINDING</scope>
    <scope>DISRUPTION PHENOTYPE</scope>
    <scope>INTERACTION WITH SINAT2</scope>
</reference>
<reference key="8">
    <citation type="journal article" date="2010" name="Plant Physiol.">
        <title>Arabidopsis RAP2.2: an ethylene response transcription factor that is important for hypoxia survival.</title>
        <authorList>
            <person name="Hinz M."/>
            <person name="Wilson I.W."/>
            <person name="Yang J."/>
            <person name="Buerstenbinder K."/>
            <person name="Llewellyn D."/>
            <person name="Dennis E.S."/>
            <person name="Sauter M."/>
            <person name="Dolferus R."/>
        </authorList>
    </citation>
    <scope>FUNCTION</scope>
    <scope>INDUCTION BY DARKNESS AND ETHYLENE</scope>
    <scope>TISSUE SPECIFICITY</scope>
</reference>
<reference key="9">
    <citation type="journal article" date="2011" name="Mol. Plant">
        <title>A high-throughput screening system for Arabidopsis transcription factors and its application to Med25-dependent transcriptional regulation.</title>
        <authorList>
            <person name="Ou B."/>
            <person name="Yin K.Q."/>
            <person name="Liu S.N."/>
            <person name="Yang Y."/>
            <person name="Gu T."/>
            <person name="Wing Hui J.M."/>
            <person name="Zhang L."/>
            <person name="Miao J."/>
            <person name="Kondou Y."/>
            <person name="Matsui M."/>
            <person name="Gu H.Y."/>
            <person name="Qu L.J."/>
        </authorList>
    </citation>
    <scope>INTERACTION WITH MED25</scope>
</reference>
<reference key="10">
    <citation type="journal article" date="2012" name="New Phytol.">
        <title>Arabidopsis RAP2.2 plays an important role in plant resistance to Botrytis cinerea and ethylene responses.</title>
        <authorList>
            <person name="Zhao Y."/>
            <person name="Wei T."/>
            <person name="Yin K.Q."/>
            <person name="Chen Z."/>
            <person name="Gu H."/>
            <person name="Qu L.J."/>
            <person name="Qin G."/>
        </authorList>
    </citation>
    <scope>FUNCTION</scope>
    <scope>INDUCTION BY ETHYLENE AND BOTRYTIS CINEREA</scope>
</reference>
<sequence length="379" mass="42526">MCGGAIISDFIPPPRSLRVTNEFIWPDLKNKVKASKKRSNKRSDFFDLDDDFEADFQGFKDDSAFDCEDDDDVFVNVKPFVFTATTKPVASAFVSTGIYLVGSAYAKKTVESAEQAEKSSKRKRKNQYRGIRQRPWGKWAAEIRDPRKGSREWLGTFDTAEEAARAYDAAARRIRGTKAKVNFPEEKNPSVVSQKRPSAKTNNLQKSVAKPNKSVTLVQQPTHLSQQYCNNSFDNSFGDMSFMEEKPQMYNNQFGLTNSFDAGGNNGYQYFSSDQGSNSFDCSEFGWSDHGPKTPEISSMLVNNNEASFVEETNAAKKLKPNSDESDDLMAYLDNALWDTPLEVEAMLGADAGAVTQEEENPVELWSLDEINFMLEGDF</sequence>
<evidence type="ECO:0000255" key="1">
    <source>
        <dbReference type="PROSITE-ProRule" id="PRU00366"/>
    </source>
</evidence>
<evidence type="ECO:0000256" key="2">
    <source>
        <dbReference type="SAM" id="MobiDB-lite"/>
    </source>
</evidence>
<evidence type="ECO:0000269" key="3">
    <source>
    </source>
</evidence>
<evidence type="ECO:0000269" key="4">
    <source>
    </source>
</evidence>
<evidence type="ECO:0000269" key="5">
    <source>
    </source>
</evidence>
<evidence type="ECO:0000269" key="6">
    <source>
    </source>
</evidence>
<evidence type="ECO:0000269" key="7">
    <source>
    </source>
</evidence>
<evidence type="ECO:0000303" key="8">
    <source>
    </source>
</evidence>
<evidence type="ECO:0000303" key="9">
    <source>
    </source>
</evidence>
<evidence type="ECO:0000305" key="10"/>